<sequence length="279" mass="30756">MNTGLYELPLVFFTVLAQSAVGAWLVFTFVLLNEKNTKSRTYIHKVMFVILALLGIGFIASIMHLGLPIRAFNSLNRVGSSMMSNEIAAGAIFFTLAGFYWLIAILGKMPVSLGNVWRIVTALIGILFMYVMNQVYHITSIPTWNNALTSWSFYLTVVLGGLTLSYALLIPNKQREYQLQHLPSLFAIGVSLVAIVAIYQGFNLHNIHSAIQNAADLVPNYAIMTVTRLCLLSIVAFLLFRVKNIGLLGISVLLTLVAEGIGRVLFYGLHMTYGMTIGG</sequence>
<name>DMSC_HAEIN</name>
<feature type="chain" id="PRO_0000079948" description="Anaerobic dimethyl sulfoxide reductase chain C">
    <location>
        <begin position="1"/>
        <end position="279"/>
    </location>
</feature>
<feature type="topological domain" description="Periplasmic" evidence="2">
    <location>
        <begin position="1"/>
        <end position="9"/>
    </location>
</feature>
<feature type="transmembrane region" description="Helical" evidence="2">
    <location>
        <begin position="10"/>
        <end position="30"/>
    </location>
</feature>
<feature type="topological domain" description="Cytoplasmic" evidence="2">
    <location>
        <begin position="31"/>
        <end position="45"/>
    </location>
</feature>
<feature type="transmembrane region" description="Helical" evidence="2">
    <location>
        <begin position="46"/>
        <end position="66"/>
    </location>
</feature>
<feature type="topological domain" description="Periplasmic" evidence="2">
    <location>
        <begin position="67"/>
        <end position="86"/>
    </location>
</feature>
<feature type="transmembrane region" description="Helical" evidence="2">
    <location>
        <begin position="87"/>
        <end position="107"/>
    </location>
</feature>
<feature type="topological domain" description="Cytoplasmic" evidence="2">
    <location>
        <begin position="108"/>
        <end position="118"/>
    </location>
</feature>
<feature type="transmembrane region" description="Helical" evidence="2">
    <location>
        <begin position="119"/>
        <end position="139"/>
    </location>
</feature>
<feature type="topological domain" description="Periplasmic" evidence="2">
    <location>
        <begin position="140"/>
        <end position="150"/>
    </location>
</feature>
<feature type="transmembrane region" description="Helical" evidence="2">
    <location>
        <begin position="151"/>
        <end position="171"/>
    </location>
</feature>
<feature type="topological domain" description="Cytoplasmic" evidence="2">
    <location>
        <begin position="172"/>
        <end position="181"/>
    </location>
</feature>
<feature type="transmembrane region" description="Helical" evidence="2">
    <location>
        <begin position="182"/>
        <end position="202"/>
    </location>
</feature>
<feature type="topological domain" description="Periplasmic" evidence="2">
    <location>
        <begin position="203"/>
        <end position="219"/>
    </location>
</feature>
<feature type="transmembrane region" description="Helical" evidence="2">
    <location>
        <begin position="220"/>
        <end position="240"/>
    </location>
</feature>
<feature type="topological domain" description="Cytoplasmic" evidence="2">
    <location>
        <begin position="241"/>
        <end position="244"/>
    </location>
</feature>
<feature type="transmembrane region" description="Helical" evidence="2">
    <location>
        <begin position="245"/>
        <end position="265"/>
    </location>
</feature>
<feature type="topological domain" description="Periplasmic" evidence="2">
    <location>
        <begin position="266"/>
        <end position="279"/>
    </location>
</feature>
<feature type="sequence variant" description="In strain: Eagan.">
    <original>V</original>
    <variation>A</variation>
    <location>
        <position position="21"/>
    </location>
</feature>
<feature type="sequence variant" description="In strain: Eagan.">
    <original>T</original>
    <variation>A</variation>
    <location>
        <position position="276"/>
    </location>
</feature>
<comment type="function">
    <text evidence="1">Terminal reductase during anaerobic growth on various sulfoxide and N-oxide compounds. DmsC anchors the DmsAB dimer to the membrane and stabilizes it (By similarity).</text>
</comment>
<comment type="subunit">
    <text evidence="1">Heterotrimeric enzyme composed of a catalytic heterodimer (DmsAB) and a membrane anchor protein (DmsC).</text>
</comment>
<comment type="subcellular location">
    <subcellularLocation>
        <location evidence="1">Cell inner membrane</location>
        <topology evidence="1">Multi-pass membrane protein</topology>
    </subcellularLocation>
</comment>
<comment type="similarity">
    <text evidence="3">Belongs to the DmsC family.</text>
</comment>
<protein>
    <recommendedName>
        <fullName>Anaerobic dimethyl sulfoxide reductase chain C</fullName>
    </recommendedName>
    <alternativeName>
        <fullName>DMSO reductase anchor subunit</fullName>
    </alternativeName>
</protein>
<keyword id="KW-0997">Cell inner membrane</keyword>
<keyword id="KW-1003">Cell membrane</keyword>
<keyword id="KW-0472">Membrane</keyword>
<keyword id="KW-0560">Oxidoreductase</keyword>
<keyword id="KW-1185">Reference proteome</keyword>
<keyword id="KW-0812">Transmembrane</keyword>
<keyword id="KW-1133">Transmembrane helix</keyword>
<evidence type="ECO:0000250" key="1"/>
<evidence type="ECO:0000255" key="2"/>
<evidence type="ECO:0000305" key="3"/>
<organism>
    <name type="scientific">Haemophilus influenzae (strain ATCC 51907 / DSM 11121 / KW20 / Rd)</name>
    <dbReference type="NCBI Taxonomy" id="71421"/>
    <lineage>
        <taxon>Bacteria</taxon>
        <taxon>Pseudomonadati</taxon>
        <taxon>Pseudomonadota</taxon>
        <taxon>Gammaproteobacteria</taxon>
        <taxon>Pasteurellales</taxon>
        <taxon>Pasteurellaceae</taxon>
        <taxon>Haemophilus</taxon>
    </lineage>
</organism>
<proteinExistence type="inferred from homology"/>
<dbReference type="EMBL" id="L42023">
    <property type="protein sequence ID" value="AAC22704.1"/>
    <property type="molecule type" value="Genomic_DNA"/>
</dbReference>
<dbReference type="EMBL" id="U26665">
    <property type="protein sequence ID" value="AAB06235.1"/>
    <property type="molecule type" value="Genomic_DNA"/>
</dbReference>
<dbReference type="PIR" id="E64109">
    <property type="entry name" value="E64109"/>
</dbReference>
<dbReference type="RefSeq" id="NP_439204.1">
    <property type="nucleotide sequence ID" value="NC_000907.1"/>
</dbReference>
<dbReference type="SMR" id="P45002"/>
<dbReference type="STRING" id="71421.HI_1045"/>
<dbReference type="EnsemblBacteria" id="AAC22704">
    <property type="protein sequence ID" value="AAC22704"/>
    <property type="gene ID" value="HI_1045"/>
</dbReference>
<dbReference type="KEGG" id="hin:HI_1045"/>
<dbReference type="PATRIC" id="fig|71421.8.peg.1090"/>
<dbReference type="eggNOG" id="COG3302">
    <property type="taxonomic scope" value="Bacteria"/>
</dbReference>
<dbReference type="HOGENOM" id="CLU_064909_2_0_6"/>
<dbReference type="OrthoDB" id="4394845at2"/>
<dbReference type="PhylomeDB" id="P45002"/>
<dbReference type="BioCyc" id="HINF71421:G1GJ1-1084-MONOMER"/>
<dbReference type="Proteomes" id="UP000000579">
    <property type="component" value="Chromosome"/>
</dbReference>
<dbReference type="GO" id="GO:0009390">
    <property type="term" value="C:dimethyl sulfoxide reductase complex"/>
    <property type="evidence" value="ECO:0000318"/>
    <property type="project" value="GO_Central"/>
</dbReference>
<dbReference type="GO" id="GO:0005886">
    <property type="term" value="C:plasma membrane"/>
    <property type="evidence" value="ECO:0000318"/>
    <property type="project" value="GO_Central"/>
</dbReference>
<dbReference type="GO" id="GO:0009389">
    <property type="term" value="F:dimethyl sulfoxide reductase activity"/>
    <property type="evidence" value="ECO:0000318"/>
    <property type="project" value="GO_Central"/>
</dbReference>
<dbReference type="GO" id="GO:0019645">
    <property type="term" value="P:anaerobic electron transport chain"/>
    <property type="evidence" value="ECO:0007669"/>
    <property type="project" value="InterPro"/>
</dbReference>
<dbReference type="GO" id="GO:0009061">
    <property type="term" value="P:anaerobic respiration"/>
    <property type="evidence" value="ECO:0000318"/>
    <property type="project" value="GO_Central"/>
</dbReference>
<dbReference type="InterPro" id="IPR007059">
    <property type="entry name" value="DmsC"/>
</dbReference>
<dbReference type="PANTHER" id="PTHR38095">
    <property type="entry name" value="ANAEROBIC DIMETHYL SULFOXIDE REDUCTASE CHAIN YNFH"/>
    <property type="match status" value="1"/>
</dbReference>
<dbReference type="PANTHER" id="PTHR38095:SF1">
    <property type="entry name" value="ANAEROBIC DIMETHYL SULFOXIDE REDUCTASE CHAIN YNFH"/>
    <property type="match status" value="1"/>
</dbReference>
<dbReference type="Pfam" id="PF04976">
    <property type="entry name" value="DmsC"/>
    <property type="match status" value="1"/>
</dbReference>
<gene>
    <name type="primary">dmsC</name>
    <name type="ordered locus">HI_1045</name>
</gene>
<reference key="1">
    <citation type="journal article" date="1995" name="Science">
        <title>Whole-genome random sequencing and assembly of Haemophilus influenzae Rd.</title>
        <authorList>
            <person name="Fleischmann R.D."/>
            <person name="Adams M.D."/>
            <person name="White O."/>
            <person name="Clayton R.A."/>
            <person name="Kirkness E.F."/>
            <person name="Kerlavage A.R."/>
            <person name="Bult C.J."/>
            <person name="Tomb J.-F."/>
            <person name="Dougherty B.A."/>
            <person name="Merrick J.M."/>
            <person name="McKenney K."/>
            <person name="Sutton G.G."/>
            <person name="FitzHugh W."/>
            <person name="Fields C.A."/>
            <person name="Gocayne J.D."/>
            <person name="Scott J.D."/>
            <person name="Shirley R."/>
            <person name="Liu L.-I."/>
            <person name="Glodek A."/>
            <person name="Kelley J.M."/>
            <person name="Weidman J.F."/>
            <person name="Phillips C.A."/>
            <person name="Spriggs T."/>
            <person name="Hedblom E."/>
            <person name="Cotton M.D."/>
            <person name="Utterback T.R."/>
            <person name="Hanna M.C."/>
            <person name="Nguyen D.T."/>
            <person name="Saudek D.M."/>
            <person name="Brandon R.C."/>
            <person name="Fine L.D."/>
            <person name="Fritchman J.L."/>
            <person name="Fuhrmann J.L."/>
            <person name="Geoghagen N.S.M."/>
            <person name="Gnehm C.L."/>
            <person name="McDonald L.A."/>
            <person name="Small K.V."/>
            <person name="Fraser C.M."/>
            <person name="Smith H.O."/>
            <person name="Venter J.C."/>
        </authorList>
    </citation>
    <scope>NUCLEOTIDE SEQUENCE [LARGE SCALE GENOMIC DNA]</scope>
    <source>
        <strain>ATCC 51907 / DSM 11121 / KW20 / Rd</strain>
    </source>
</reference>
<reference key="2">
    <citation type="journal article" date="1996" name="Gene">
        <title>Sequences of the genes encoding the A, B and C subunits of the Haemophilus influenzae dimethylsulfoxide reductase complex.</title>
        <authorList>
            <person name="Loosmore S.M."/>
            <person name="Shortreed J.M."/>
            <person name="Coleman D.C."/>
            <person name="England D.M."/>
            <person name="Klein M.H."/>
        </authorList>
    </citation>
    <scope>NUCLEOTIDE SEQUENCE [GENOMIC DNA]</scope>
    <source>
        <strain>Eagan / Serotype B</strain>
    </source>
</reference>
<accession>P45002</accession>
<accession>Q48050</accession>